<protein>
    <recommendedName>
        <fullName evidence="1">Methionyl-tRNA formyltransferase</fullName>
        <ecNumber evidence="1">2.1.2.9</ecNumber>
    </recommendedName>
</protein>
<proteinExistence type="inferred from homology"/>
<dbReference type="EC" id="2.1.2.9" evidence="1"/>
<dbReference type="EMBL" id="CP000767">
    <property type="protein sequence ID" value="EAU01041.1"/>
    <property type="molecule type" value="Genomic_DNA"/>
</dbReference>
<dbReference type="RefSeq" id="WP_009649283.1">
    <property type="nucleotide sequence ID" value="NC_009715.2"/>
</dbReference>
<dbReference type="SMR" id="A7H026"/>
<dbReference type="STRING" id="360105.CCV52592_1729"/>
<dbReference type="KEGG" id="ccv:CCV52592_1729"/>
<dbReference type="HOGENOM" id="CLU_033347_1_1_7"/>
<dbReference type="OrthoDB" id="9802815at2"/>
<dbReference type="Proteomes" id="UP000006380">
    <property type="component" value="Chromosome"/>
</dbReference>
<dbReference type="GO" id="GO:0005829">
    <property type="term" value="C:cytosol"/>
    <property type="evidence" value="ECO:0007669"/>
    <property type="project" value="TreeGrafter"/>
</dbReference>
<dbReference type="GO" id="GO:0004479">
    <property type="term" value="F:methionyl-tRNA formyltransferase activity"/>
    <property type="evidence" value="ECO:0007669"/>
    <property type="project" value="UniProtKB-UniRule"/>
</dbReference>
<dbReference type="CDD" id="cd08646">
    <property type="entry name" value="FMT_core_Met-tRNA-FMT_N"/>
    <property type="match status" value="1"/>
</dbReference>
<dbReference type="CDD" id="cd08704">
    <property type="entry name" value="Met_tRNA_FMT_C"/>
    <property type="match status" value="1"/>
</dbReference>
<dbReference type="Gene3D" id="3.10.25.10">
    <property type="entry name" value="Formyl transferase, C-terminal domain"/>
    <property type="match status" value="1"/>
</dbReference>
<dbReference type="Gene3D" id="3.40.50.170">
    <property type="entry name" value="Formyl transferase, N-terminal domain"/>
    <property type="match status" value="1"/>
</dbReference>
<dbReference type="HAMAP" id="MF_00182">
    <property type="entry name" value="Formyl_trans"/>
    <property type="match status" value="1"/>
</dbReference>
<dbReference type="InterPro" id="IPR005794">
    <property type="entry name" value="Fmt"/>
</dbReference>
<dbReference type="InterPro" id="IPR005793">
    <property type="entry name" value="Formyl_trans_C"/>
</dbReference>
<dbReference type="InterPro" id="IPR037022">
    <property type="entry name" value="Formyl_trans_C_sf"/>
</dbReference>
<dbReference type="InterPro" id="IPR002376">
    <property type="entry name" value="Formyl_transf_N"/>
</dbReference>
<dbReference type="InterPro" id="IPR036477">
    <property type="entry name" value="Formyl_transf_N_sf"/>
</dbReference>
<dbReference type="InterPro" id="IPR011034">
    <property type="entry name" value="Formyl_transferase-like_C_sf"/>
</dbReference>
<dbReference type="InterPro" id="IPR044135">
    <property type="entry name" value="Met-tRNA-FMT_C"/>
</dbReference>
<dbReference type="InterPro" id="IPR041711">
    <property type="entry name" value="Met-tRNA-FMT_N"/>
</dbReference>
<dbReference type="NCBIfam" id="TIGR00460">
    <property type="entry name" value="fmt"/>
    <property type="match status" value="1"/>
</dbReference>
<dbReference type="PANTHER" id="PTHR11138">
    <property type="entry name" value="METHIONYL-TRNA FORMYLTRANSFERASE"/>
    <property type="match status" value="1"/>
</dbReference>
<dbReference type="PANTHER" id="PTHR11138:SF5">
    <property type="entry name" value="METHIONYL-TRNA FORMYLTRANSFERASE, MITOCHONDRIAL"/>
    <property type="match status" value="1"/>
</dbReference>
<dbReference type="Pfam" id="PF02911">
    <property type="entry name" value="Formyl_trans_C"/>
    <property type="match status" value="1"/>
</dbReference>
<dbReference type="Pfam" id="PF00551">
    <property type="entry name" value="Formyl_trans_N"/>
    <property type="match status" value="1"/>
</dbReference>
<dbReference type="SUPFAM" id="SSF50486">
    <property type="entry name" value="FMT C-terminal domain-like"/>
    <property type="match status" value="1"/>
</dbReference>
<dbReference type="SUPFAM" id="SSF53328">
    <property type="entry name" value="Formyltransferase"/>
    <property type="match status" value="1"/>
</dbReference>
<accession>A7H026</accession>
<organism>
    <name type="scientific">Campylobacter curvus (strain 525.92)</name>
    <dbReference type="NCBI Taxonomy" id="360105"/>
    <lineage>
        <taxon>Bacteria</taxon>
        <taxon>Pseudomonadati</taxon>
        <taxon>Campylobacterota</taxon>
        <taxon>Epsilonproteobacteria</taxon>
        <taxon>Campylobacterales</taxon>
        <taxon>Campylobacteraceae</taxon>
        <taxon>Campylobacter</taxon>
    </lineage>
</organism>
<keyword id="KW-0648">Protein biosynthesis</keyword>
<keyword id="KW-1185">Reference proteome</keyword>
<keyword id="KW-0808">Transferase</keyword>
<feature type="chain" id="PRO_1000203849" description="Methionyl-tRNA formyltransferase">
    <location>
        <begin position="1"/>
        <end position="301"/>
    </location>
</feature>
<feature type="binding site" evidence="1">
    <location>
        <begin position="109"/>
        <end position="112"/>
    </location>
    <ligand>
        <name>(6S)-5,6,7,8-tetrahydrofolate</name>
        <dbReference type="ChEBI" id="CHEBI:57453"/>
    </ligand>
</feature>
<name>FMT_CAMC5</name>
<reference key="1">
    <citation type="submission" date="2007-07" db="EMBL/GenBank/DDBJ databases">
        <title>Genome sequence of Campylobacter curvus 525.92 isolated from human feces.</title>
        <authorList>
            <person name="Fouts D.E."/>
            <person name="Mongodin E.F."/>
            <person name="Puiu D."/>
            <person name="Sebastian Y."/>
            <person name="Miller W.G."/>
            <person name="Mandrell R.E."/>
            <person name="Lastovica A.J."/>
            <person name="Nelson K.E."/>
        </authorList>
    </citation>
    <scope>NUCLEOTIDE SEQUENCE [LARGE SCALE GENOMIC DNA]</scope>
    <source>
        <strain>525.92</strain>
    </source>
</reference>
<sequence>MNIIFMGTPAYARTILDALVRAGIGVAGVFTQPDKPVGRKQILTPSEVKIYAQQNLPHAKIFQPKTLKEGTVAAEILALKPDFIVVAAYGKILPKSVLDIAPCINLHASILPKYRGASPIQAALLNGEKNTGVTAMLMDEGLDTGDMLGFTHVSCEGKRSAEMFEILGELAGELAVKTLFDFKNLTPQKQDDALATHCKKIQKSDGLVNLSEDAEQIYNKFRAFHEWPGVFLESGLKFLELNLAEGSGAAGEILRIEKDGFVVACGTGALKILALQEAGKKALDAKAYINGKRLVAGNKIS</sequence>
<gene>
    <name evidence="1" type="primary">fmt</name>
    <name type="ordered locus">Ccur92_15140</name>
    <name type="ORF">CCV52592_1729</name>
</gene>
<comment type="function">
    <text evidence="1">Attaches a formyl group to the free amino group of methionyl-tRNA(fMet). The formyl group appears to play a dual role in the initiator identity of N-formylmethionyl-tRNA by promoting its recognition by IF2 and preventing the misappropriation of this tRNA by the elongation apparatus.</text>
</comment>
<comment type="catalytic activity">
    <reaction evidence="1">
        <text>L-methionyl-tRNA(fMet) + (6R)-10-formyltetrahydrofolate = N-formyl-L-methionyl-tRNA(fMet) + (6S)-5,6,7,8-tetrahydrofolate + H(+)</text>
        <dbReference type="Rhea" id="RHEA:24380"/>
        <dbReference type="Rhea" id="RHEA-COMP:9952"/>
        <dbReference type="Rhea" id="RHEA-COMP:9953"/>
        <dbReference type="ChEBI" id="CHEBI:15378"/>
        <dbReference type="ChEBI" id="CHEBI:57453"/>
        <dbReference type="ChEBI" id="CHEBI:78530"/>
        <dbReference type="ChEBI" id="CHEBI:78844"/>
        <dbReference type="ChEBI" id="CHEBI:195366"/>
        <dbReference type="EC" id="2.1.2.9"/>
    </reaction>
</comment>
<comment type="similarity">
    <text evidence="1">Belongs to the Fmt family.</text>
</comment>
<evidence type="ECO:0000255" key="1">
    <source>
        <dbReference type="HAMAP-Rule" id="MF_00182"/>
    </source>
</evidence>